<gene>
    <name evidence="2" type="primary">prtC</name>
</gene>
<organism>
    <name type="scientific">Porphyromonas gingivalis</name>
    <name type="common">Bacteroides gingivalis</name>
    <dbReference type="NCBI Taxonomy" id="837"/>
    <lineage>
        <taxon>Bacteria</taxon>
        <taxon>Pseudomonadati</taxon>
        <taxon>Bacteroidota</taxon>
        <taxon>Bacteroidia</taxon>
        <taxon>Bacteroidales</taxon>
        <taxon>Porphyromonadaceae</taxon>
        <taxon>Porphyromonas</taxon>
    </lineage>
</organism>
<sequence length="361" mass="41055">DLYKIAEICRDKGVKSYLTVNTVIYDEDMTLMRSVIDAAQKAQISAIIASDVAAMTYANEIGVEVHLSTQLNISNAEALRFIALAMWSYWQRAEYGSGTYNPRDHRQGHICGPKGHPVRIEMFAHGALCMAVSGKCYLSLHEHNTSANRGACAQICRRGYTVKDSGLELDIENQYIMSPKDLKTIHFINKMMDAGVRVFKIEGRARGPEYVYTVCRCYKEAIEAYCNGTYDEESIGRWDEQLATVFNRGFWDGYYLGQRLGEWTHRYGSGRTRQKTYVGKGIKYFSRLGVAEFEIESGELHIGDEIVITGPTTGVIIQKVEEIRYELQTVEKATKGQRISIPVKEKVRPSDKLYRFDKREE</sequence>
<accession>P33437</accession>
<name>PRTC2_PORGN</name>
<feature type="chain" id="PRO_0000028523" description="Collagenase">
    <location>
        <begin position="1"/>
        <end position="361"/>
    </location>
</feature>
<feature type="non-terminal residue">
    <location>
        <position position="1"/>
    </location>
</feature>
<proteinExistence type="evidence at protein level"/>
<reference key="1">
    <citation type="journal article" date="1992" name="J. Bacteriol.">
        <title>Sequence analysis and characterization of the Porphyromonas gingivalis prtC gene, which expresses a novel collagenase activity.</title>
        <authorList>
            <person name="Kato T."/>
            <person name="Takahashi N."/>
            <person name="Kuramitsu H.K."/>
        </authorList>
    </citation>
    <scope>NUCLEOTIDE SEQUENCE [GENOMIC DNA]</scope>
    <scope>FUNCTION</scope>
    <scope>ACTIVITY REGULATION</scope>
    <scope>COFACTOR</scope>
    <scope>SUBUNIT</scope>
    <source>
        <strain>ATCC 53977</strain>
    </source>
</reference>
<comment type="function">
    <text evidence="1">Has collagenase activity. Active on soluble collagen, reconstituted type I collagen, heat denatured type I collagen and azocoll, but not gelatin or the synthetic bacterial collagenase substrate PZ-PLGPA. May play a role in virulence.</text>
</comment>
<comment type="cofactor">
    <cofactor evidence="4">
        <name>a metal cation</name>
        <dbReference type="ChEBI" id="CHEBI:25213"/>
    </cofactor>
</comment>
<comment type="activity regulation">
    <text evidence="1">Activity somewhat enhanced by calcium ions, inhibited by zinc and Fe(3+) ions and by p-chloromercuribenzoic acid and EDTA. Activity is enhanced by salivary peptide cystatin and reduced by salivary peptide histatin.</text>
</comment>
<comment type="subunit">
    <text evidence="1">Homodimer.</text>
</comment>
<comment type="similarity">
    <text evidence="3">Belongs to the peptidase U32 family.</text>
</comment>
<comment type="caution">
    <text evidence="3">Upon comparison to genes from other strains this is probably a fragment, and may have a number of sequencing errors.</text>
</comment>
<comment type="sequence caution" evidence="3">
    <conflict type="erroneous initiation">
        <sequence resource="EMBL-CDS" id="AAA25650"/>
    </conflict>
    <text>Extended N-terminus.</text>
</comment>
<evidence type="ECO:0000269" key="1">
    <source>
    </source>
</evidence>
<evidence type="ECO:0000303" key="2">
    <source>
    </source>
</evidence>
<evidence type="ECO:0000305" key="3"/>
<evidence type="ECO:0000305" key="4">
    <source>
    </source>
</evidence>
<protein>
    <recommendedName>
        <fullName evidence="2">Collagenase</fullName>
        <ecNumber>3.4.-.-</ecNumber>
    </recommendedName>
</protein>
<dbReference type="EC" id="3.4.-.-"/>
<dbReference type="EMBL" id="M60404">
    <property type="protein sequence ID" value="AAA25650.1"/>
    <property type="status" value="ALT_INIT"/>
    <property type="molecule type" value="Genomic_DNA"/>
</dbReference>
<dbReference type="PIR" id="A41881">
    <property type="entry name" value="A41881"/>
</dbReference>
<dbReference type="SMR" id="P33437"/>
<dbReference type="ChEMBL" id="CHEMBL1909489"/>
<dbReference type="MEROPS" id="U32.001"/>
<dbReference type="GO" id="GO:0008233">
    <property type="term" value="F:peptidase activity"/>
    <property type="evidence" value="ECO:0007669"/>
    <property type="project" value="UniProtKB-KW"/>
</dbReference>
<dbReference type="GO" id="GO:0009058">
    <property type="term" value="P:biosynthetic process"/>
    <property type="evidence" value="ECO:0007669"/>
    <property type="project" value="UniProtKB-ARBA"/>
</dbReference>
<dbReference type="GO" id="GO:0006508">
    <property type="term" value="P:proteolysis"/>
    <property type="evidence" value="ECO:0007669"/>
    <property type="project" value="UniProtKB-KW"/>
</dbReference>
<dbReference type="InterPro" id="IPR001539">
    <property type="entry name" value="Peptidase_U32"/>
</dbReference>
<dbReference type="InterPro" id="IPR051454">
    <property type="entry name" value="RNA/ubiquinone_mod_enzymes"/>
</dbReference>
<dbReference type="InterPro" id="IPR009000">
    <property type="entry name" value="Transl_B-barrel_sf"/>
</dbReference>
<dbReference type="PANTHER" id="PTHR30217">
    <property type="entry name" value="PEPTIDASE U32 FAMILY"/>
    <property type="match status" value="1"/>
</dbReference>
<dbReference type="PANTHER" id="PTHR30217:SF6">
    <property type="entry name" value="TRNA HYDROXYLATION PROTEIN P"/>
    <property type="match status" value="1"/>
</dbReference>
<dbReference type="Pfam" id="PF01136">
    <property type="entry name" value="Peptidase_U32"/>
    <property type="match status" value="2"/>
</dbReference>
<dbReference type="SUPFAM" id="SSF50447">
    <property type="entry name" value="Translation proteins"/>
    <property type="match status" value="1"/>
</dbReference>
<dbReference type="PROSITE" id="PS01276">
    <property type="entry name" value="PEPTIDASE_U32"/>
    <property type="match status" value="1"/>
</dbReference>
<keyword id="KW-0378">Hydrolase</keyword>
<keyword id="KW-0645">Protease</keyword>
<keyword id="KW-0843">Virulence</keyword>